<comment type="function">
    <text evidence="1">One of the early assembly proteins it binds 23S rRNA. One of the proteins that surrounds the polypeptide exit tunnel on the outside of the ribosome. Forms the main docking site for trigger factor binding to the ribosome.</text>
</comment>
<comment type="subunit">
    <text evidence="1">Part of the 50S ribosomal subunit. Contacts protein L29, and trigger factor when it is bound to the ribosome.</text>
</comment>
<comment type="similarity">
    <text evidence="1">Belongs to the universal ribosomal protein uL23 family.</text>
</comment>
<dbReference type="EMBL" id="AE001439">
    <property type="protein sequence ID" value="AAD06788.1"/>
    <property type="molecule type" value="Genomic_DNA"/>
</dbReference>
<dbReference type="RefSeq" id="WP_000763613.1">
    <property type="nucleotide sequence ID" value="NZ_CP011330.1"/>
</dbReference>
<dbReference type="SMR" id="P66120"/>
<dbReference type="KEGG" id="hpj:jhp_1237"/>
<dbReference type="PATRIC" id="fig|85963.30.peg.1334"/>
<dbReference type="eggNOG" id="COG0089">
    <property type="taxonomic scope" value="Bacteria"/>
</dbReference>
<dbReference type="Proteomes" id="UP000000804">
    <property type="component" value="Chromosome"/>
</dbReference>
<dbReference type="GO" id="GO:1990904">
    <property type="term" value="C:ribonucleoprotein complex"/>
    <property type="evidence" value="ECO:0007669"/>
    <property type="project" value="UniProtKB-KW"/>
</dbReference>
<dbReference type="GO" id="GO:0005840">
    <property type="term" value="C:ribosome"/>
    <property type="evidence" value="ECO:0007669"/>
    <property type="project" value="UniProtKB-KW"/>
</dbReference>
<dbReference type="GO" id="GO:0019843">
    <property type="term" value="F:rRNA binding"/>
    <property type="evidence" value="ECO:0007669"/>
    <property type="project" value="UniProtKB-UniRule"/>
</dbReference>
<dbReference type="GO" id="GO:0003735">
    <property type="term" value="F:structural constituent of ribosome"/>
    <property type="evidence" value="ECO:0007669"/>
    <property type="project" value="InterPro"/>
</dbReference>
<dbReference type="GO" id="GO:0006412">
    <property type="term" value="P:translation"/>
    <property type="evidence" value="ECO:0007669"/>
    <property type="project" value="UniProtKB-UniRule"/>
</dbReference>
<dbReference type="Gene3D" id="3.30.70.330">
    <property type="match status" value="1"/>
</dbReference>
<dbReference type="HAMAP" id="MF_01369_B">
    <property type="entry name" value="Ribosomal_uL23_B"/>
    <property type="match status" value="1"/>
</dbReference>
<dbReference type="InterPro" id="IPR012677">
    <property type="entry name" value="Nucleotide-bd_a/b_plait_sf"/>
</dbReference>
<dbReference type="InterPro" id="IPR013025">
    <property type="entry name" value="Ribosomal_uL23-like"/>
</dbReference>
<dbReference type="InterPro" id="IPR012678">
    <property type="entry name" value="Ribosomal_uL23/eL15/eS24_sf"/>
</dbReference>
<dbReference type="NCBIfam" id="NF004362">
    <property type="entry name" value="PRK05738.2-2"/>
    <property type="match status" value="1"/>
</dbReference>
<dbReference type="Pfam" id="PF00276">
    <property type="entry name" value="Ribosomal_L23"/>
    <property type="match status" value="1"/>
</dbReference>
<dbReference type="SUPFAM" id="SSF54189">
    <property type="entry name" value="Ribosomal proteins S24e, L23 and L15e"/>
    <property type="match status" value="1"/>
</dbReference>
<keyword id="KW-0687">Ribonucleoprotein</keyword>
<keyword id="KW-0689">Ribosomal protein</keyword>
<keyword id="KW-0694">RNA-binding</keyword>
<keyword id="KW-0699">rRNA-binding</keyword>
<name>RL23_HELPJ</name>
<evidence type="ECO:0000255" key="1">
    <source>
        <dbReference type="HAMAP-Rule" id="MF_01369"/>
    </source>
</evidence>
<evidence type="ECO:0000305" key="2"/>
<reference key="1">
    <citation type="journal article" date="1999" name="Nature">
        <title>Genomic sequence comparison of two unrelated isolates of the human gastric pathogen Helicobacter pylori.</title>
        <authorList>
            <person name="Alm R.A."/>
            <person name="Ling L.-S.L."/>
            <person name="Moir D.T."/>
            <person name="King B.L."/>
            <person name="Brown E.D."/>
            <person name="Doig P.C."/>
            <person name="Smith D.R."/>
            <person name="Noonan B."/>
            <person name="Guild B.C."/>
            <person name="deJonge B.L."/>
            <person name="Carmel G."/>
            <person name="Tummino P.J."/>
            <person name="Caruso A."/>
            <person name="Uria-Nickelsen M."/>
            <person name="Mills D.M."/>
            <person name="Ives C."/>
            <person name="Gibson R."/>
            <person name="Merberg D."/>
            <person name="Mills S.D."/>
            <person name="Jiang Q."/>
            <person name="Taylor D.E."/>
            <person name="Vovis G.F."/>
            <person name="Trust T.J."/>
        </authorList>
    </citation>
    <scope>NUCLEOTIDE SEQUENCE [LARGE SCALE GENOMIC DNA]</scope>
    <source>
        <strain>J99 / ATCC 700824</strain>
    </source>
</reference>
<gene>
    <name evidence="1" type="primary">rplW</name>
    <name type="ordered locus">jhp_1237</name>
</gene>
<organism>
    <name type="scientific">Helicobacter pylori (strain J99 / ATCC 700824)</name>
    <name type="common">Campylobacter pylori J99</name>
    <dbReference type="NCBI Taxonomy" id="85963"/>
    <lineage>
        <taxon>Bacteria</taxon>
        <taxon>Pseudomonadati</taxon>
        <taxon>Campylobacterota</taxon>
        <taxon>Epsilonproteobacteria</taxon>
        <taxon>Campylobacterales</taxon>
        <taxon>Helicobacteraceae</taxon>
        <taxon>Helicobacter</taxon>
    </lineage>
</organism>
<accession>P66120</accession>
<accession>P56048</accession>
<feature type="chain" id="PRO_0000129412" description="Large ribosomal subunit protein uL23">
    <location>
        <begin position="1"/>
        <end position="93"/>
    </location>
</feature>
<protein>
    <recommendedName>
        <fullName evidence="1">Large ribosomal subunit protein uL23</fullName>
    </recommendedName>
    <alternativeName>
        <fullName evidence="2">50S ribosomal protein L23</fullName>
    </alternativeName>
</protein>
<proteinExistence type="inferred from homology"/>
<sequence length="93" mass="10454">MADIMDIKSILYTEKSLGLQEKGVLVVQTAQNVTKNQLKEVFKTYFGFEPLKINSLKQEGKVKRFRGKLGQRKSFKKFYVKVPEGASIAALGA</sequence>